<organism>
    <name type="scientific">Homo sapiens</name>
    <name type="common">Human</name>
    <dbReference type="NCBI Taxonomy" id="9606"/>
    <lineage>
        <taxon>Eukaryota</taxon>
        <taxon>Metazoa</taxon>
        <taxon>Chordata</taxon>
        <taxon>Craniata</taxon>
        <taxon>Vertebrata</taxon>
        <taxon>Euteleostomi</taxon>
        <taxon>Mammalia</taxon>
        <taxon>Eutheria</taxon>
        <taxon>Euarchontoglires</taxon>
        <taxon>Primates</taxon>
        <taxon>Haplorrhini</taxon>
        <taxon>Catarrhini</taxon>
        <taxon>Hominidae</taxon>
        <taxon>Homo</taxon>
    </lineage>
</organism>
<proteinExistence type="evidence at transcript level"/>
<evidence type="ECO:0000250" key="1"/>
<evidence type="ECO:0000256" key="2">
    <source>
        <dbReference type="SAM" id="MobiDB-lite"/>
    </source>
</evidence>
<evidence type="ECO:0000269" key="3">
    <source>
    </source>
</evidence>
<evidence type="ECO:0000305" key="4"/>
<gene>
    <name type="primary">EBLN1</name>
</gene>
<reference key="1">
    <citation type="journal article" date="2004" name="Nature">
        <title>The DNA sequence and comparative analysis of human chromosome 10.</title>
        <authorList>
            <person name="Deloukas P."/>
            <person name="Earthrowl M.E."/>
            <person name="Grafham D.V."/>
            <person name="Rubenfield M."/>
            <person name="French L."/>
            <person name="Steward C.A."/>
            <person name="Sims S.K."/>
            <person name="Jones M.C."/>
            <person name="Searle S."/>
            <person name="Scott C."/>
            <person name="Howe K."/>
            <person name="Hunt S.E."/>
            <person name="Andrews T.D."/>
            <person name="Gilbert J.G.R."/>
            <person name="Swarbreck D."/>
            <person name="Ashurst J.L."/>
            <person name="Taylor A."/>
            <person name="Battles J."/>
            <person name="Bird C.P."/>
            <person name="Ainscough R."/>
            <person name="Almeida J.P."/>
            <person name="Ashwell R.I.S."/>
            <person name="Ambrose K.D."/>
            <person name="Babbage A.K."/>
            <person name="Bagguley C.L."/>
            <person name="Bailey J."/>
            <person name="Banerjee R."/>
            <person name="Bates K."/>
            <person name="Beasley H."/>
            <person name="Bray-Allen S."/>
            <person name="Brown A.J."/>
            <person name="Brown J.Y."/>
            <person name="Burford D.C."/>
            <person name="Burrill W."/>
            <person name="Burton J."/>
            <person name="Cahill P."/>
            <person name="Camire D."/>
            <person name="Carter N.P."/>
            <person name="Chapman J.C."/>
            <person name="Clark S.Y."/>
            <person name="Clarke G."/>
            <person name="Clee C.M."/>
            <person name="Clegg S."/>
            <person name="Corby N."/>
            <person name="Coulson A."/>
            <person name="Dhami P."/>
            <person name="Dutta I."/>
            <person name="Dunn M."/>
            <person name="Faulkner L."/>
            <person name="Frankish A."/>
            <person name="Frankland J.A."/>
            <person name="Garner P."/>
            <person name="Garnett J."/>
            <person name="Gribble S."/>
            <person name="Griffiths C."/>
            <person name="Grocock R."/>
            <person name="Gustafson E."/>
            <person name="Hammond S."/>
            <person name="Harley J.L."/>
            <person name="Hart E."/>
            <person name="Heath P.D."/>
            <person name="Ho T.P."/>
            <person name="Hopkins B."/>
            <person name="Horne J."/>
            <person name="Howden P.J."/>
            <person name="Huckle E."/>
            <person name="Hynds C."/>
            <person name="Johnson C."/>
            <person name="Johnson D."/>
            <person name="Kana A."/>
            <person name="Kay M."/>
            <person name="Kimberley A.M."/>
            <person name="Kershaw J.K."/>
            <person name="Kokkinaki M."/>
            <person name="Laird G.K."/>
            <person name="Lawlor S."/>
            <person name="Lee H.M."/>
            <person name="Leongamornlert D.A."/>
            <person name="Laird G."/>
            <person name="Lloyd C."/>
            <person name="Lloyd D.M."/>
            <person name="Loveland J."/>
            <person name="Lovell J."/>
            <person name="McLaren S."/>
            <person name="McLay K.E."/>
            <person name="McMurray A."/>
            <person name="Mashreghi-Mohammadi M."/>
            <person name="Matthews L."/>
            <person name="Milne S."/>
            <person name="Nickerson T."/>
            <person name="Nguyen M."/>
            <person name="Overton-Larty E."/>
            <person name="Palmer S.A."/>
            <person name="Pearce A.V."/>
            <person name="Peck A.I."/>
            <person name="Pelan S."/>
            <person name="Phillimore B."/>
            <person name="Porter K."/>
            <person name="Rice C.M."/>
            <person name="Rogosin A."/>
            <person name="Ross M.T."/>
            <person name="Sarafidou T."/>
            <person name="Sehra H.K."/>
            <person name="Shownkeen R."/>
            <person name="Skuce C.D."/>
            <person name="Smith M."/>
            <person name="Standring L."/>
            <person name="Sycamore N."/>
            <person name="Tester J."/>
            <person name="Thorpe A."/>
            <person name="Torcasso W."/>
            <person name="Tracey A."/>
            <person name="Tromans A."/>
            <person name="Tsolas J."/>
            <person name="Wall M."/>
            <person name="Walsh J."/>
            <person name="Wang H."/>
            <person name="Weinstock K."/>
            <person name="West A.P."/>
            <person name="Willey D.L."/>
            <person name="Whitehead S.L."/>
            <person name="Wilming L."/>
            <person name="Wray P.W."/>
            <person name="Young L."/>
            <person name="Chen Y."/>
            <person name="Lovering R.C."/>
            <person name="Moschonas N.K."/>
            <person name="Siebert R."/>
            <person name="Fechtel K."/>
            <person name="Bentley D."/>
            <person name="Durbin R.M."/>
            <person name="Hubbard T."/>
            <person name="Doucette-Stamm L."/>
            <person name="Beck S."/>
            <person name="Smith D.R."/>
            <person name="Rogers J."/>
        </authorList>
    </citation>
    <scope>NUCLEOTIDE SEQUENCE [LARGE SCALE GENOMIC DNA]</scope>
</reference>
<reference key="2">
    <citation type="submission" date="2005-07" db="EMBL/GenBank/DDBJ databases">
        <authorList>
            <person name="Mural R.J."/>
            <person name="Istrail S."/>
            <person name="Sutton G.G."/>
            <person name="Florea L."/>
            <person name="Halpern A.L."/>
            <person name="Mobarry C.M."/>
            <person name="Lippert R."/>
            <person name="Walenz B."/>
            <person name="Shatkay H."/>
            <person name="Dew I."/>
            <person name="Miller J.R."/>
            <person name="Flanigan M.J."/>
            <person name="Edwards N.J."/>
            <person name="Bolanos R."/>
            <person name="Fasulo D."/>
            <person name="Halldorsson B.V."/>
            <person name="Hannenhalli S."/>
            <person name="Turner R."/>
            <person name="Yooseph S."/>
            <person name="Lu F."/>
            <person name="Nusskern D.R."/>
            <person name="Shue B.C."/>
            <person name="Zheng X.H."/>
            <person name="Zhong F."/>
            <person name="Delcher A.L."/>
            <person name="Huson D.H."/>
            <person name="Kravitz S.A."/>
            <person name="Mouchard L."/>
            <person name="Reinert K."/>
            <person name="Remington K.A."/>
            <person name="Clark A.G."/>
            <person name="Waterman M.S."/>
            <person name="Eichler E.E."/>
            <person name="Adams M.D."/>
            <person name="Hunkapiller M.W."/>
            <person name="Myers E.W."/>
            <person name="Venter J.C."/>
        </authorList>
    </citation>
    <scope>NUCLEOTIDE SEQUENCE [LARGE SCALE GENOMIC DNA]</scope>
</reference>
<reference key="3">
    <citation type="journal article" date="2010" name="Nature">
        <title>Endogenous non-retroviral RNA virus elements in mammalian genomes.</title>
        <authorList>
            <person name="Horie M."/>
            <person name="Honda T."/>
            <person name="Suzuki Y."/>
            <person name="Kobayashi Y."/>
            <person name="Daito T."/>
            <person name="Oshida T."/>
            <person name="Ikuta K."/>
            <person name="Jern P."/>
            <person name="Gojobori T."/>
            <person name="Coffin J.M."/>
            <person name="Tomonaga K."/>
        </authorList>
    </citation>
    <scope>SIMILARITY WITH BORNAVIRUS NUCLEOCAPSID</scope>
</reference>
<accession>P0CF75</accession>
<accession>S4R316</accession>
<feature type="chain" id="PRO_0000393911" description="Endogenous Bornavirus-like nucleoprotein 1">
    <location>
        <begin position="1"/>
        <end position="366"/>
    </location>
</feature>
<feature type="region of interest" description="Disordered" evidence="2">
    <location>
        <begin position="1"/>
        <end position="22"/>
    </location>
</feature>
<feature type="compositionally biased region" description="Polar residues" evidence="2">
    <location>
        <begin position="1"/>
        <end position="15"/>
    </location>
</feature>
<feature type="sequence conflict" description="In Ref. 2; EAW86159." evidence="4" ref="2">
    <original>G</original>
    <variation>R</variation>
    <location>
        <position position="149"/>
    </location>
</feature>
<feature type="sequence conflict" description="In Ref. 2; EAW86159." evidence="4" ref="2">
    <original>M</original>
    <variation>T</variation>
    <location>
        <position position="235"/>
    </location>
</feature>
<keyword id="KW-1185">Reference proteome</keyword>
<comment type="function">
    <text evidence="1">May act as an RNA-binding protein. Highly homologous to the bornavirus nucleocapsid N protein that binds viral RNA and oligomerizes (By similarity).</text>
</comment>
<comment type="tissue specificity">
    <text evidence="3">Expression detected by RT-PCR in a few cell lines, including OL, HEK293T and MOLT-4. Not observed in HeLa cells (PubMed:20054395).</text>
</comment>
<comment type="miscellaneous">
    <text>Bornavirus is a non-retroviral RNA virus that does not generate DNA forms during viral replication. Therefore, integration of EBLN-1 must have occur through a mechanism relying on an endogenous reverse transcriptase activity.</text>
</comment>
<protein>
    <recommendedName>
        <fullName>Endogenous Bornavirus-like nucleoprotein 1</fullName>
    </recommendedName>
    <alternativeName>
        <fullName>Endogenous Borna-like N element-1</fullName>
        <shortName>EBLN-1</shortName>
    </alternativeName>
</protein>
<sequence>MSRPRNNPQTSSPQDSTKDGSSFHYFQGRFELSGKSRQYPADALEPQPGIGDVKVIEKATKSMLDPAQRSHFYLVTPSLVFLCFIFDGLHKALLSVGVSKRSNIVIGNENKETGTLYASKFEDVLPTFTALEMSSILRHCCDLIGIAAGSSDPICTNSLQVQRQFKAMMISIGRPLHSESADLLISYNAGPAIDWINSRPWVGGLMFTFLFGEFESPACELLDQVKVVASKAQMMTYYTVRMFLDQCVDGSTALPAVVLEIPVFEQKKPLAKKVLGDFFEFGGVLRHPVIGVLSPQMFPNLATAANYWAKRRNSTFSGFEALDIIPGSTITFPVLQMASAQKISRGSDMDPYTLNILRGYGISGFE</sequence>
<name>EBLN1_HUMAN</name>
<dbReference type="EMBL" id="AL157831">
    <property type="status" value="NOT_ANNOTATED_CDS"/>
    <property type="molecule type" value="Genomic_DNA"/>
</dbReference>
<dbReference type="EMBL" id="CH471072">
    <property type="protein sequence ID" value="EAW86159.1"/>
    <property type="molecule type" value="Genomic_DNA"/>
</dbReference>
<dbReference type="CCDS" id="CCDS60498.1"/>
<dbReference type="RefSeq" id="NP_001186867.1">
    <property type="nucleotide sequence ID" value="NM_001199938.2"/>
</dbReference>
<dbReference type="RefSeq" id="NP_001381686.1">
    <property type="nucleotide sequence ID" value="NM_001394757.1"/>
</dbReference>
<dbReference type="SMR" id="P0CF75"/>
<dbReference type="BioGRID" id="131105">
    <property type="interactions" value="3"/>
</dbReference>
<dbReference type="IntAct" id="P0CF75">
    <property type="interactions" value="2"/>
</dbReference>
<dbReference type="STRING" id="9606.ENSP00000473842"/>
<dbReference type="iPTMnet" id="P0CF75"/>
<dbReference type="PhosphoSitePlus" id="P0CF75"/>
<dbReference type="BioMuta" id="EBLN1"/>
<dbReference type="DMDM" id="296537812"/>
<dbReference type="PaxDb" id="9606-ENSP00000473842"/>
<dbReference type="DNASU" id="340900"/>
<dbReference type="Ensembl" id="ENST00000422359.3">
    <property type="protein sequence ID" value="ENSP00000473842.1"/>
    <property type="gene ID" value="ENSG00000223601.3"/>
</dbReference>
<dbReference type="GeneID" id="340900"/>
<dbReference type="KEGG" id="hsa:340900"/>
<dbReference type="MANE-Select" id="ENST00000422359.3">
    <property type="protein sequence ID" value="ENSP00000473842.1"/>
    <property type="RefSeq nucleotide sequence ID" value="NM_001394757.1"/>
    <property type="RefSeq protein sequence ID" value="NP_001381686.1"/>
</dbReference>
<dbReference type="UCSC" id="uc021pob.2">
    <property type="organism name" value="human"/>
</dbReference>
<dbReference type="AGR" id="HGNC:39430"/>
<dbReference type="CTD" id="340900"/>
<dbReference type="DisGeNET" id="340900"/>
<dbReference type="GeneCards" id="EBLN1"/>
<dbReference type="HGNC" id="HGNC:39430">
    <property type="gene designation" value="EBLN1"/>
</dbReference>
<dbReference type="HPA" id="ENSG00000223601">
    <property type="expression patterns" value="Tissue enriched (testis)"/>
</dbReference>
<dbReference type="MIM" id="613249">
    <property type="type" value="gene"/>
</dbReference>
<dbReference type="neXtProt" id="NX_P0CF75"/>
<dbReference type="OpenTargets" id="ENSG00000223601"/>
<dbReference type="VEuPathDB" id="HostDB:ENSG00000223601"/>
<dbReference type="eggNOG" id="ENOG502TDPR">
    <property type="taxonomic scope" value="Eukaryota"/>
</dbReference>
<dbReference type="GeneTree" id="ENSGT00490000044176"/>
<dbReference type="HOGENOM" id="CLU_756391_0_0_1"/>
<dbReference type="InParanoid" id="P0CF75"/>
<dbReference type="OMA" id="TAANYWA"/>
<dbReference type="OrthoDB" id="9809323at2759"/>
<dbReference type="PAN-GO" id="P0CF75">
    <property type="GO annotations" value="0 GO annotations based on evolutionary models"/>
</dbReference>
<dbReference type="PathwayCommons" id="P0CF75"/>
<dbReference type="SignaLink" id="P0CF75"/>
<dbReference type="BioGRID-ORCS" id="340900">
    <property type="hits" value="21 hits in 1111 CRISPR screens"/>
</dbReference>
<dbReference type="GenomeRNAi" id="340900"/>
<dbReference type="Pharos" id="P0CF75">
    <property type="development level" value="Tdark"/>
</dbReference>
<dbReference type="PRO" id="PR:P0CF75"/>
<dbReference type="Proteomes" id="UP000005640">
    <property type="component" value="Chromosome 10"/>
</dbReference>
<dbReference type="RNAct" id="P0CF75">
    <property type="molecule type" value="protein"/>
</dbReference>
<dbReference type="Bgee" id="ENSG00000223601">
    <property type="expression patterns" value="Expressed in primordial germ cell in gonad and 4 other cell types or tissues"/>
</dbReference>
<dbReference type="Gene3D" id="1.10.3040.10">
    <property type="entry name" value="borna disease virus nucleoprotein, domain 1"/>
    <property type="match status" value="1"/>
</dbReference>
<dbReference type="Gene3D" id="1.10.3050.10">
    <property type="entry name" value="borna disease virus nucleoprotein, domain 2"/>
    <property type="match status" value="1"/>
</dbReference>
<dbReference type="InterPro" id="IPR009441">
    <property type="entry name" value="P40_nucleoprot_BD-vir"/>
</dbReference>
<dbReference type="InterPro" id="IPR036260">
    <property type="entry name" value="P40_nucleoprot_sf_BD-vir"/>
</dbReference>
<dbReference type="InterPro" id="IPR015969">
    <property type="entry name" value="P40_nucleoprot_sub1_BD-vir"/>
</dbReference>
<dbReference type="InterPro" id="IPR015970">
    <property type="entry name" value="P40_nucleoprot_sub2_BD-vir"/>
</dbReference>
<dbReference type="Pfam" id="PF06407">
    <property type="entry name" value="BDV_P40"/>
    <property type="match status" value="1"/>
</dbReference>
<dbReference type="SUPFAM" id="SSF101399">
    <property type="entry name" value="P40 nucleoprotein"/>
    <property type="match status" value="1"/>
</dbReference>